<comment type="function">
    <text evidence="1">Part of the ABC transporter complex MetNIQ involved in methionine import. Responsible for energy coupling to the transport system.</text>
</comment>
<comment type="catalytic activity">
    <reaction evidence="1">
        <text>L-methionine(out) + ATP + H2O = L-methionine(in) + ADP + phosphate + H(+)</text>
        <dbReference type="Rhea" id="RHEA:29779"/>
        <dbReference type="ChEBI" id="CHEBI:15377"/>
        <dbReference type="ChEBI" id="CHEBI:15378"/>
        <dbReference type="ChEBI" id="CHEBI:30616"/>
        <dbReference type="ChEBI" id="CHEBI:43474"/>
        <dbReference type="ChEBI" id="CHEBI:57844"/>
        <dbReference type="ChEBI" id="CHEBI:456216"/>
        <dbReference type="EC" id="7.4.2.11"/>
    </reaction>
</comment>
<comment type="catalytic activity">
    <reaction evidence="1">
        <text>D-methionine(out) + ATP + H2O = D-methionine(in) + ADP + phosphate + H(+)</text>
        <dbReference type="Rhea" id="RHEA:29767"/>
        <dbReference type="ChEBI" id="CHEBI:15377"/>
        <dbReference type="ChEBI" id="CHEBI:15378"/>
        <dbReference type="ChEBI" id="CHEBI:30616"/>
        <dbReference type="ChEBI" id="CHEBI:43474"/>
        <dbReference type="ChEBI" id="CHEBI:57932"/>
        <dbReference type="ChEBI" id="CHEBI:456216"/>
        <dbReference type="EC" id="7.4.2.11"/>
    </reaction>
</comment>
<comment type="subunit">
    <text evidence="1">The complex is composed of two ATP-binding proteins (MetN), two transmembrane proteins (MetI) and a solute-binding protein (MetQ).</text>
</comment>
<comment type="subcellular location">
    <subcellularLocation>
        <location evidence="1">Cell inner membrane</location>
        <topology evidence="1">Peripheral membrane protein</topology>
    </subcellularLocation>
</comment>
<comment type="similarity">
    <text evidence="1">Belongs to the ABC transporter superfamily. Methionine importer (TC 3.A.1.24) family.</text>
</comment>
<comment type="sequence caution" evidence="2">
    <conflict type="erroneous initiation">
        <sequence resource="EMBL-CDS" id="AAX75706"/>
    </conflict>
</comment>
<proteinExistence type="inferred from homology"/>
<name>METN_BRUAB</name>
<feature type="chain" id="PRO_0000270257" description="Methionine import ATP-binding protein MetN">
    <location>
        <begin position="1"/>
        <end position="369"/>
    </location>
</feature>
<feature type="domain" description="ABC transporter" evidence="1">
    <location>
        <begin position="31"/>
        <end position="266"/>
    </location>
</feature>
<feature type="binding site" evidence="1">
    <location>
        <begin position="63"/>
        <end position="70"/>
    </location>
    <ligand>
        <name>ATP</name>
        <dbReference type="ChEBI" id="CHEBI:30616"/>
    </ligand>
</feature>
<reference key="1">
    <citation type="journal article" date="2005" name="J. Bacteriol.">
        <title>Completion of the genome sequence of Brucella abortus and comparison to the highly similar genomes of Brucella melitensis and Brucella suis.</title>
        <authorList>
            <person name="Halling S.M."/>
            <person name="Peterson-Burch B.D."/>
            <person name="Bricker B.J."/>
            <person name="Zuerner R.L."/>
            <person name="Qing Z."/>
            <person name="Li L.-L."/>
            <person name="Kapur V."/>
            <person name="Alt D.P."/>
            <person name="Olsen S.C."/>
        </authorList>
    </citation>
    <scope>NUCLEOTIDE SEQUENCE [LARGE SCALE GENOMIC DNA]</scope>
    <source>
        <strain>9-941</strain>
    </source>
</reference>
<evidence type="ECO:0000255" key="1">
    <source>
        <dbReference type="HAMAP-Rule" id="MF_01719"/>
    </source>
</evidence>
<evidence type="ECO:0000305" key="2"/>
<protein>
    <recommendedName>
        <fullName evidence="1">Methionine import ATP-binding protein MetN</fullName>
        <ecNumber evidence="1">7.4.2.11</ecNumber>
    </recommendedName>
</protein>
<accession>Q579H8</accession>
<dbReference type="EC" id="7.4.2.11" evidence="1"/>
<dbReference type="EMBL" id="AE017224">
    <property type="protein sequence ID" value="AAX75706.1"/>
    <property type="status" value="ALT_INIT"/>
    <property type="molecule type" value="Genomic_DNA"/>
</dbReference>
<dbReference type="SMR" id="Q579H8"/>
<dbReference type="EnsemblBacteria" id="AAX75706">
    <property type="protein sequence ID" value="AAX75706"/>
    <property type="gene ID" value="BruAb2_0272"/>
</dbReference>
<dbReference type="KEGG" id="bmb:BruAb2_0272"/>
<dbReference type="HOGENOM" id="CLU_000604_1_3_5"/>
<dbReference type="Proteomes" id="UP000000540">
    <property type="component" value="Chromosome II"/>
</dbReference>
<dbReference type="GO" id="GO:0005886">
    <property type="term" value="C:plasma membrane"/>
    <property type="evidence" value="ECO:0007669"/>
    <property type="project" value="UniProtKB-SubCell"/>
</dbReference>
<dbReference type="GO" id="GO:0033232">
    <property type="term" value="F:ABC-type D-methionine transporter activity"/>
    <property type="evidence" value="ECO:0007669"/>
    <property type="project" value="UniProtKB-EC"/>
</dbReference>
<dbReference type="GO" id="GO:0005524">
    <property type="term" value="F:ATP binding"/>
    <property type="evidence" value="ECO:0007669"/>
    <property type="project" value="UniProtKB-KW"/>
</dbReference>
<dbReference type="GO" id="GO:0016887">
    <property type="term" value="F:ATP hydrolysis activity"/>
    <property type="evidence" value="ECO:0007669"/>
    <property type="project" value="InterPro"/>
</dbReference>
<dbReference type="CDD" id="cd03258">
    <property type="entry name" value="ABC_MetN_methionine_transporter"/>
    <property type="match status" value="1"/>
</dbReference>
<dbReference type="FunFam" id="3.40.50.300:FF:000056">
    <property type="entry name" value="Cell division ATP-binding protein FtsE"/>
    <property type="match status" value="1"/>
</dbReference>
<dbReference type="Gene3D" id="3.30.70.260">
    <property type="match status" value="1"/>
</dbReference>
<dbReference type="Gene3D" id="3.40.50.300">
    <property type="entry name" value="P-loop containing nucleotide triphosphate hydrolases"/>
    <property type="match status" value="1"/>
</dbReference>
<dbReference type="InterPro" id="IPR003593">
    <property type="entry name" value="AAA+_ATPase"/>
</dbReference>
<dbReference type="InterPro" id="IPR003439">
    <property type="entry name" value="ABC_transporter-like_ATP-bd"/>
</dbReference>
<dbReference type="InterPro" id="IPR017871">
    <property type="entry name" value="ABC_transporter-like_CS"/>
</dbReference>
<dbReference type="InterPro" id="IPR045865">
    <property type="entry name" value="ACT-like_dom_sf"/>
</dbReference>
<dbReference type="InterPro" id="IPR041701">
    <property type="entry name" value="MetN_ABC"/>
</dbReference>
<dbReference type="InterPro" id="IPR050086">
    <property type="entry name" value="MetN_ABC_transporter-like"/>
</dbReference>
<dbReference type="InterPro" id="IPR018449">
    <property type="entry name" value="NIL_domain"/>
</dbReference>
<dbReference type="InterPro" id="IPR027417">
    <property type="entry name" value="P-loop_NTPase"/>
</dbReference>
<dbReference type="PANTHER" id="PTHR43166">
    <property type="entry name" value="AMINO ACID IMPORT ATP-BINDING PROTEIN"/>
    <property type="match status" value="1"/>
</dbReference>
<dbReference type="PANTHER" id="PTHR43166:SF30">
    <property type="entry name" value="METHIONINE IMPORT ATP-BINDING PROTEIN METN"/>
    <property type="match status" value="1"/>
</dbReference>
<dbReference type="Pfam" id="PF00005">
    <property type="entry name" value="ABC_tran"/>
    <property type="match status" value="1"/>
</dbReference>
<dbReference type="Pfam" id="PF09383">
    <property type="entry name" value="NIL"/>
    <property type="match status" value="1"/>
</dbReference>
<dbReference type="SMART" id="SM00382">
    <property type="entry name" value="AAA"/>
    <property type="match status" value="1"/>
</dbReference>
<dbReference type="SMART" id="SM00930">
    <property type="entry name" value="NIL"/>
    <property type="match status" value="1"/>
</dbReference>
<dbReference type="SUPFAM" id="SSF55021">
    <property type="entry name" value="ACT-like"/>
    <property type="match status" value="1"/>
</dbReference>
<dbReference type="SUPFAM" id="SSF52540">
    <property type="entry name" value="P-loop containing nucleoside triphosphate hydrolases"/>
    <property type="match status" value="1"/>
</dbReference>
<dbReference type="PROSITE" id="PS00211">
    <property type="entry name" value="ABC_TRANSPORTER_1"/>
    <property type="match status" value="1"/>
</dbReference>
<dbReference type="PROSITE" id="PS50893">
    <property type="entry name" value="ABC_TRANSPORTER_2"/>
    <property type="match status" value="1"/>
</dbReference>
<dbReference type="PROSITE" id="PS51264">
    <property type="entry name" value="METN"/>
    <property type="match status" value="1"/>
</dbReference>
<keyword id="KW-0029">Amino-acid transport</keyword>
<keyword id="KW-0067">ATP-binding</keyword>
<keyword id="KW-0997">Cell inner membrane</keyword>
<keyword id="KW-1003">Cell membrane</keyword>
<keyword id="KW-0472">Membrane</keyword>
<keyword id="KW-0547">Nucleotide-binding</keyword>
<keyword id="KW-1278">Translocase</keyword>
<keyword id="KW-0813">Transport</keyword>
<organism>
    <name type="scientific">Brucella abortus biovar 1 (strain 9-941)</name>
    <dbReference type="NCBI Taxonomy" id="262698"/>
    <lineage>
        <taxon>Bacteria</taxon>
        <taxon>Pseudomonadati</taxon>
        <taxon>Pseudomonadota</taxon>
        <taxon>Alphaproteobacteria</taxon>
        <taxon>Hyphomicrobiales</taxon>
        <taxon>Brucellaceae</taxon>
        <taxon>Brucella/Ochrobactrum group</taxon>
        <taxon>Brucella</taxon>
    </lineage>
</organism>
<sequence length="369" mass="39445">MQHAAVCSGTSRHRRTTVTIEKPPATSAPIVEMKDVRRMFGETAAINGVSLSVARGEILGIIGRSGAGKSTLIRCVNGLEKPDTGSIHIEGREITSLDEDALRPVRRRIGMVFQHFNLLSAKTAAQNIALPLKIAGMPKAERIKRVAELLELVGLSDKASHYPAQLSGGQKQRVGIARALAAEPAVLLSDEATSALDPETTQSILALLKDINAKLGLTILLITHEMDVIRRIADRVIVLDHGLIAEEGPVWKVFANPQSPVTQSMLQVLTPELPAIWRNRLEKKGDQAILRVKLSGMAAKGAFFNDVAAATSLAPQLIHGGMDTIQGEPVGTLFIGLPAEDKTKLKAAIGYLNTHADATEVLGYVSGNA</sequence>
<gene>
    <name evidence="1" type="primary">metN</name>
    <name type="ordered locus">BruAb2_0272</name>
</gene>